<reference key="1">
    <citation type="journal article" date="2008" name="J. Bacteriol.">
        <title>The pangenome structure of Escherichia coli: comparative genomic analysis of E. coli commensal and pathogenic isolates.</title>
        <authorList>
            <person name="Rasko D.A."/>
            <person name="Rosovitz M.J."/>
            <person name="Myers G.S.A."/>
            <person name="Mongodin E.F."/>
            <person name="Fricke W.F."/>
            <person name="Gajer P."/>
            <person name="Crabtree J."/>
            <person name="Sebaihia M."/>
            <person name="Thomson N.R."/>
            <person name="Chaudhuri R."/>
            <person name="Henderson I.R."/>
            <person name="Sperandio V."/>
            <person name="Ravel J."/>
        </authorList>
    </citation>
    <scope>NUCLEOTIDE SEQUENCE [LARGE SCALE GENOMIC DNA]</scope>
    <source>
        <strain>HS</strain>
    </source>
</reference>
<accession>A8A504</accession>
<evidence type="ECO:0000255" key="1">
    <source>
        <dbReference type="HAMAP-Rule" id="MF_00111"/>
    </source>
</evidence>
<gene>
    <name evidence="1" type="primary">murA</name>
    <name type="ordered locus">EcHS_A3382</name>
</gene>
<organism>
    <name type="scientific">Escherichia coli O9:H4 (strain HS)</name>
    <dbReference type="NCBI Taxonomy" id="331112"/>
    <lineage>
        <taxon>Bacteria</taxon>
        <taxon>Pseudomonadati</taxon>
        <taxon>Pseudomonadota</taxon>
        <taxon>Gammaproteobacteria</taxon>
        <taxon>Enterobacterales</taxon>
        <taxon>Enterobacteriaceae</taxon>
        <taxon>Escherichia</taxon>
    </lineage>
</organism>
<keyword id="KW-0131">Cell cycle</keyword>
<keyword id="KW-0132">Cell division</keyword>
<keyword id="KW-0133">Cell shape</keyword>
<keyword id="KW-0961">Cell wall biogenesis/degradation</keyword>
<keyword id="KW-0963">Cytoplasm</keyword>
<keyword id="KW-0573">Peptidoglycan synthesis</keyword>
<keyword id="KW-0670">Pyruvate</keyword>
<keyword id="KW-0808">Transferase</keyword>
<dbReference type="EC" id="2.5.1.7" evidence="1"/>
<dbReference type="EMBL" id="CP000802">
    <property type="protein sequence ID" value="ABV07608.1"/>
    <property type="molecule type" value="Genomic_DNA"/>
</dbReference>
<dbReference type="RefSeq" id="WP_000357259.1">
    <property type="nucleotide sequence ID" value="NC_009800.1"/>
</dbReference>
<dbReference type="SMR" id="A8A504"/>
<dbReference type="GeneID" id="93778792"/>
<dbReference type="KEGG" id="ecx:EcHS_A3382"/>
<dbReference type="HOGENOM" id="CLU_027387_0_0_6"/>
<dbReference type="UniPathway" id="UPA00219"/>
<dbReference type="GO" id="GO:0005737">
    <property type="term" value="C:cytoplasm"/>
    <property type="evidence" value="ECO:0007669"/>
    <property type="project" value="UniProtKB-SubCell"/>
</dbReference>
<dbReference type="GO" id="GO:0008760">
    <property type="term" value="F:UDP-N-acetylglucosamine 1-carboxyvinyltransferase activity"/>
    <property type="evidence" value="ECO:0007669"/>
    <property type="project" value="UniProtKB-UniRule"/>
</dbReference>
<dbReference type="GO" id="GO:0051301">
    <property type="term" value="P:cell division"/>
    <property type="evidence" value="ECO:0007669"/>
    <property type="project" value="UniProtKB-KW"/>
</dbReference>
<dbReference type="GO" id="GO:0071555">
    <property type="term" value="P:cell wall organization"/>
    <property type="evidence" value="ECO:0007669"/>
    <property type="project" value="UniProtKB-KW"/>
</dbReference>
<dbReference type="GO" id="GO:0009252">
    <property type="term" value="P:peptidoglycan biosynthetic process"/>
    <property type="evidence" value="ECO:0007669"/>
    <property type="project" value="UniProtKB-UniRule"/>
</dbReference>
<dbReference type="GO" id="GO:0008360">
    <property type="term" value="P:regulation of cell shape"/>
    <property type="evidence" value="ECO:0007669"/>
    <property type="project" value="UniProtKB-KW"/>
</dbReference>
<dbReference type="GO" id="GO:0019277">
    <property type="term" value="P:UDP-N-acetylgalactosamine biosynthetic process"/>
    <property type="evidence" value="ECO:0007669"/>
    <property type="project" value="InterPro"/>
</dbReference>
<dbReference type="CDD" id="cd01555">
    <property type="entry name" value="UdpNAET"/>
    <property type="match status" value="1"/>
</dbReference>
<dbReference type="FunFam" id="3.65.10.10:FF:000002">
    <property type="entry name" value="UDP-N-acetylglucosamine 1-carboxyvinyltransferase"/>
    <property type="match status" value="1"/>
</dbReference>
<dbReference type="Gene3D" id="3.65.10.10">
    <property type="entry name" value="Enolpyruvate transferase domain"/>
    <property type="match status" value="2"/>
</dbReference>
<dbReference type="HAMAP" id="MF_00111">
    <property type="entry name" value="MurA"/>
    <property type="match status" value="1"/>
</dbReference>
<dbReference type="InterPro" id="IPR001986">
    <property type="entry name" value="Enolpyruvate_Tfrase_dom"/>
</dbReference>
<dbReference type="InterPro" id="IPR036968">
    <property type="entry name" value="Enolpyruvate_Tfrase_sf"/>
</dbReference>
<dbReference type="InterPro" id="IPR050068">
    <property type="entry name" value="MurA_subfamily"/>
</dbReference>
<dbReference type="InterPro" id="IPR013792">
    <property type="entry name" value="RNA3'P_cycl/enolpyr_Trfase_a/b"/>
</dbReference>
<dbReference type="InterPro" id="IPR005750">
    <property type="entry name" value="UDP_GlcNAc_COvinyl_MurA"/>
</dbReference>
<dbReference type="NCBIfam" id="TIGR01072">
    <property type="entry name" value="murA"/>
    <property type="match status" value="1"/>
</dbReference>
<dbReference type="NCBIfam" id="NF006873">
    <property type="entry name" value="PRK09369.1"/>
    <property type="match status" value="1"/>
</dbReference>
<dbReference type="PANTHER" id="PTHR43783">
    <property type="entry name" value="UDP-N-ACETYLGLUCOSAMINE 1-CARBOXYVINYLTRANSFERASE"/>
    <property type="match status" value="1"/>
</dbReference>
<dbReference type="PANTHER" id="PTHR43783:SF1">
    <property type="entry name" value="UDP-N-ACETYLGLUCOSAMINE 1-CARBOXYVINYLTRANSFERASE"/>
    <property type="match status" value="1"/>
</dbReference>
<dbReference type="Pfam" id="PF00275">
    <property type="entry name" value="EPSP_synthase"/>
    <property type="match status" value="1"/>
</dbReference>
<dbReference type="SUPFAM" id="SSF55205">
    <property type="entry name" value="EPT/RTPC-like"/>
    <property type="match status" value="1"/>
</dbReference>
<feature type="chain" id="PRO_1000057730" description="UDP-N-acetylglucosamine 1-carboxyvinyltransferase">
    <location>
        <begin position="1"/>
        <end position="419"/>
    </location>
</feature>
<feature type="active site" description="Proton donor" evidence="1">
    <location>
        <position position="115"/>
    </location>
</feature>
<feature type="binding site" evidence="1">
    <location>
        <begin position="22"/>
        <end position="23"/>
    </location>
    <ligand>
        <name>phosphoenolpyruvate</name>
        <dbReference type="ChEBI" id="CHEBI:58702"/>
    </ligand>
</feature>
<feature type="binding site" evidence="1">
    <location>
        <position position="91"/>
    </location>
    <ligand>
        <name>UDP-N-acetyl-alpha-D-glucosamine</name>
        <dbReference type="ChEBI" id="CHEBI:57705"/>
    </ligand>
</feature>
<feature type="binding site" evidence="1">
    <location>
        <begin position="120"/>
        <end position="124"/>
    </location>
    <ligand>
        <name>UDP-N-acetyl-alpha-D-glucosamine</name>
        <dbReference type="ChEBI" id="CHEBI:57705"/>
    </ligand>
</feature>
<feature type="binding site" evidence="1">
    <location>
        <begin position="160"/>
        <end position="163"/>
    </location>
    <ligand>
        <name>UDP-N-acetyl-alpha-D-glucosamine</name>
        <dbReference type="ChEBI" id="CHEBI:57705"/>
    </ligand>
</feature>
<feature type="binding site" evidence="1">
    <location>
        <position position="305"/>
    </location>
    <ligand>
        <name>UDP-N-acetyl-alpha-D-glucosamine</name>
        <dbReference type="ChEBI" id="CHEBI:57705"/>
    </ligand>
</feature>
<feature type="binding site" evidence="1">
    <location>
        <position position="327"/>
    </location>
    <ligand>
        <name>UDP-N-acetyl-alpha-D-glucosamine</name>
        <dbReference type="ChEBI" id="CHEBI:57705"/>
    </ligand>
</feature>
<feature type="modified residue" description="2-(S-cysteinyl)pyruvic acid O-phosphothioketal" evidence="1">
    <location>
        <position position="115"/>
    </location>
</feature>
<proteinExistence type="inferred from homology"/>
<sequence length="419" mass="44818">MDKFRVQGPTKLQGEVTISGAKNAALPILFAALLAEEPVEIQNVPKLKDVDTSMKLLSQLGAKVERNGSVHIDARDVNVFCAPYDLVKTMRASIWALGPLVARFGQGQVSLPGGCTIGARPVDLHISGLEQLGATIKLEEGYVKASVDGRLKGAHIVMDKVSVGATVTIMCAATLAEGTTIIENAAREPEIVDTANFLITLGAKISGQGTDRIVIEGVERLGGGVYRVLPDRIETGTFLVAAAISRGKIICRNAQPDTLDAVLAKLRDAGADIEVGEDWISLDMHGKRPKAVNVRTAPHPAFPTDMQAQFTLLNLVAEGTGFITETVFENRFMHVPELSRMGAHAEIESNTVICHGVEKLSGAQVMATDLRASASLVLAGCIAEGTTVVDRIYHIDRGYERIEDKLRALGANIERVKGE</sequence>
<comment type="function">
    <text evidence="1">Cell wall formation. Adds enolpyruvyl to UDP-N-acetylglucosamine.</text>
</comment>
<comment type="catalytic activity">
    <reaction evidence="1">
        <text>phosphoenolpyruvate + UDP-N-acetyl-alpha-D-glucosamine = UDP-N-acetyl-3-O-(1-carboxyvinyl)-alpha-D-glucosamine + phosphate</text>
        <dbReference type="Rhea" id="RHEA:18681"/>
        <dbReference type="ChEBI" id="CHEBI:43474"/>
        <dbReference type="ChEBI" id="CHEBI:57705"/>
        <dbReference type="ChEBI" id="CHEBI:58702"/>
        <dbReference type="ChEBI" id="CHEBI:68483"/>
        <dbReference type="EC" id="2.5.1.7"/>
    </reaction>
</comment>
<comment type="pathway">
    <text evidence="1">Cell wall biogenesis; peptidoglycan biosynthesis.</text>
</comment>
<comment type="subcellular location">
    <subcellularLocation>
        <location evidence="1">Cytoplasm</location>
    </subcellularLocation>
</comment>
<comment type="similarity">
    <text evidence="1">Belongs to the EPSP synthase family. MurA subfamily.</text>
</comment>
<protein>
    <recommendedName>
        <fullName evidence="1">UDP-N-acetylglucosamine 1-carboxyvinyltransferase</fullName>
        <ecNumber evidence="1">2.5.1.7</ecNumber>
    </recommendedName>
    <alternativeName>
        <fullName evidence="1">Enoylpyruvate transferase</fullName>
    </alternativeName>
    <alternativeName>
        <fullName evidence="1">UDP-N-acetylglucosamine enolpyruvyl transferase</fullName>
        <shortName evidence="1">EPT</shortName>
    </alternativeName>
</protein>
<name>MURA_ECOHS</name>